<keyword id="KW-0227">DNA damage</keyword>
<keyword id="KW-0234">DNA repair</keyword>
<keyword id="KW-1185">Reference proteome</keyword>
<proteinExistence type="inferred from homology"/>
<comment type="function">
    <text evidence="1">This protein is involved in the repair of mismatches in DNA. It is required for dam-dependent methyl-directed DNA mismatch repair. May act as a 'molecular matchmaker', a protein that promotes the formation of a stable complex between two or more DNA-binding proteins in an ATP-dependent manner without itself being part of a final effector complex.</text>
</comment>
<comment type="similarity">
    <text evidence="1">Belongs to the DNA mismatch repair MutL/HexB family.</text>
</comment>
<reference key="1">
    <citation type="journal article" date="2008" name="Proc. Natl. Acad. Sci. U.S.A.">
        <title>The genome of Cyanothece 51142, a unicellular diazotrophic cyanobacterium important in the marine nitrogen cycle.</title>
        <authorList>
            <person name="Welsh E.A."/>
            <person name="Liberton M."/>
            <person name="Stoeckel J."/>
            <person name="Loh T."/>
            <person name="Elvitigala T."/>
            <person name="Wang C."/>
            <person name="Wollam A."/>
            <person name="Fulton R.S."/>
            <person name="Clifton S.W."/>
            <person name="Jacobs J.M."/>
            <person name="Aurora R."/>
            <person name="Ghosh B.K."/>
            <person name="Sherman L.A."/>
            <person name="Smith R.D."/>
            <person name="Wilson R.K."/>
            <person name="Pakrasi H.B."/>
        </authorList>
    </citation>
    <scope>NUCLEOTIDE SEQUENCE [LARGE SCALE GENOMIC DNA]</scope>
    <source>
        <strain>ATCC 51142 / BH68</strain>
    </source>
</reference>
<gene>
    <name evidence="1" type="primary">mutL</name>
    <name type="ordered locus">cce_0299</name>
</gene>
<feature type="chain" id="PRO_1000096645" description="DNA mismatch repair protein MutL">
    <location>
        <begin position="1"/>
        <end position="554"/>
    </location>
</feature>
<name>MUTL_CROS5</name>
<accession>B1X109</accession>
<protein>
    <recommendedName>
        <fullName evidence="1">DNA mismatch repair protein MutL</fullName>
    </recommendedName>
</protein>
<organism>
    <name type="scientific">Crocosphaera subtropica (strain ATCC 51142 / BH68)</name>
    <name type="common">Cyanothece sp. (strain ATCC 51142)</name>
    <dbReference type="NCBI Taxonomy" id="43989"/>
    <lineage>
        <taxon>Bacteria</taxon>
        <taxon>Bacillati</taxon>
        <taxon>Cyanobacteriota</taxon>
        <taxon>Cyanophyceae</taxon>
        <taxon>Oscillatoriophycideae</taxon>
        <taxon>Chroococcales</taxon>
        <taxon>Aphanothecaceae</taxon>
        <taxon>Crocosphaera</taxon>
        <taxon>Crocosphaera subtropica</taxon>
    </lineage>
</organism>
<sequence length="554" mass="62454">MSPPIQLLSPEIVNLIAAGEVIDSLAAVVRELVENAIDAEATRLTISIVPELWQVTVADNGRGMSLENLRHCAKAHHTSKICDLDDLWKITSLGFRGEALFSITQVGQLTIKSRDATGYQVGWCVDYNQQGEIIKEQTSPMASGTIVTASNLFGTIPVRRQGLPTIKQQLKAIQGMIDNMSLCHPQITWQVYHNHQSWLTISPGKTPQQILPQLLKSVHFHDLQFLCETIITPSQEQAKLEMVLGLPDRTSRGRLDWLKIAVNGRVVRSPRLEQTILAGLSRTLPKGRFPVSFLHFKIPPSEIDWNRHPAKTEIYLQSLEFWQEKVTEIIEKALKLSPLTITTVGQNQRVKKLLKASENKGVYNVGTSHVNELDLIKLRAVGQVNKTYIVAEHSQGLWLVEQHIAHERVLYEQLQDQWQLIPVEQAIILTQLSTKQVEQLERIGIDIEPFGENTWAVRNVPKLLENREDCPDALIELSLGGDLETAQVAVACRSAIRNGVLLDLAQMQDLLDSWKKTRNPRTCPHGRPIYLSLEESSLSRFFRRHWVIGKSHGI</sequence>
<evidence type="ECO:0000255" key="1">
    <source>
        <dbReference type="HAMAP-Rule" id="MF_00149"/>
    </source>
</evidence>
<dbReference type="EMBL" id="CP000806">
    <property type="protein sequence ID" value="ACB49650.1"/>
    <property type="molecule type" value="Genomic_DNA"/>
</dbReference>
<dbReference type="RefSeq" id="WP_009546790.1">
    <property type="nucleotide sequence ID" value="NC_010546.1"/>
</dbReference>
<dbReference type="SMR" id="B1X109"/>
<dbReference type="STRING" id="43989.cce_0299"/>
<dbReference type="KEGG" id="cyt:cce_0299"/>
<dbReference type="eggNOG" id="COG0323">
    <property type="taxonomic scope" value="Bacteria"/>
</dbReference>
<dbReference type="HOGENOM" id="CLU_004131_4_1_3"/>
<dbReference type="OrthoDB" id="9763467at2"/>
<dbReference type="Proteomes" id="UP000001203">
    <property type="component" value="Chromosome circular"/>
</dbReference>
<dbReference type="GO" id="GO:0032300">
    <property type="term" value="C:mismatch repair complex"/>
    <property type="evidence" value="ECO:0007669"/>
    <property type="project" value="InterPro"/>
</dbReference>
<dbReference type="GO" id="GO:0005524">
    <property type="term" value="F:ATP binding"/>
    <property type="evidence" value="ECO:0007669"/>
    <property type="project" value="InterPro"/>
</dbReference>
<dbReference type="GO" id="GO:0016887">
    <property type="term" value="F:ATP hydrolysis activity"/>
    <property type="evidence" value="ECO:0007669"/>
    <property type="project" value="InterPro"/>
</dbReference>
<dbReference type="GO" id="GO:0140664">
    <property type="term" value="F:ATP-dependent DNA damage sensor activity"/>
    <property type="evidence" value="ECO:0007669"/>
    <property type="project" value="InterPro"/>
</dbReference>
<dbReference type="GO" id="GO:0030983">
    <property type="term" value="F:mismatched DNA binding"/>
    <property type="evidence" value="ECO:0007669"/>
    <property type="project" value="InterPro"/>
</dbReference>
<dbReference type="GO" id="GO:0006298">
    <property type="term" value="P:mismatch repair"/>
    <property type="evidence" value="ECO:0007669"/>
    <property type="project" value="UniProtKB-UniRule"/>
</dbReference>
<dbReference type="CDD" id="cd16926">
    <property type="entry name" value="HATPase_MutL-MLH-PMS-like"/>
    <property type="match status" value="1"/>
</dbReference>
<dbReference type="CDD" id="cd00782">
    <property type="entry name" value="MutL_Trans"/>
    <property type="match status" value="1"/>
</dbReference>
<dbReference type="FunFam" id="3.30.565.10:FF:000003">
    <property type="entry name" value="DNA mismatch repair endonuclease MutL"/>
    <property type="match status" value="1"/>
</dbReference>
<dbReference type="Gene3D" id="3.30.230.10">
    <property type="match status" value="1"/>
</dbReference>
<dbReference type="Gene3D" id="3.30.565.10">
    <property type="entry name" value="Histidine kinase-like ATPase, C-terminal domain"/>
    <property type="match status" value="1"/>
</dbReference>
<dbReference type="Gene3D" id="3.30.1540.20">
    <property type="entry name" value="MutL, C-terminal domain, dimerisation subdomain"/>
    <property type="match status" value="1"/>
</dbReference>
<dbReference type="Gene3D" id="3.30.1370.100">
    <property type="entry name" value="MutL, C-terminal domain, regulatory subdomain"/>
    <property type="match status" value="1"/>
</dbReference>
<dbReference type="HAMAP" id="MF_00149">
    <property type="entry name" value="DNA_mis_repair"/>
    <property type="match status" value="1"/>
</dbReference>
<dbReference type="InterPro" id="IPR014762">
    <property type="entry name" value="DNA_mismatch_repair_CS"/>
</dbReference>
<dbReference type="InterPro" id="IPR020667">
    <property type="entry name" value="DNA_mismatch_repair_MutL"/>
</dbReference>
<dbReference type="InterPro" id="IPR013507">
    <property type="entry name" value="DNA_mismatch_S5_2-like"/>
</dbReference>
<dbReference type="InterPro" id="IPR036890">
    <property type="entry name" value="HATPase_C_sf"/>
</dbReference>
<dbReference type="InterPro" id="IPR002099">
    <property type="entry name" value="MutL/Mlh/PMS"/>
</dbReference>
<dbReference type="InterPro" id="IPR038973">
    <property type="entry name" value="MutL/Mlh/Pms-like"/>
</dbReference>
<dbReference type="InterPro" id="IPR014790">
    <property type="entry name" value="MutL_C"/>
</dbReference>
<dbReference type="InterPro" id="IPR042120">
    <property type="entry name" value="MutL_C_dimsub"/>
</dbReference>
<dbReference type="InterPro" id="IPR042121">
    <property type="entry name" value="MutL_C_regsub"/>
</dbReference>
<dbReference type="InterPro" id="IPR037198">
    <property type="entry name" value="MutL_C_sf"/>
</dbReference>
<dbReference type="InterPro" id="IPR020568">
    <property type="entry name" value="Ribosomal_Su5_D2-typ_SF"/>
</dbReference>
<dbReference type="InterPro" id="IPR014721">
    <property type="entry name" value="Ribsml_uS5_D2-typ_fold_subgr"/>
</dbReference>
<dbReference type="NCBIfam" id="TIGR00585">
    <property type="entry name" value="mutl"/>
    <property type="match status" value="1"/>
</dbReference>
<dbReference type="NCBIfam" id="NF000951">
    <property type="entry name" value="PRK00095.2-1"/>
    <property type="match status" value="1"/>
</dbReference>
<dbReference type="PANTHER" id="PTHR10073">
    <property type="entry name" value="DNA MISMATCH REPAIR PROTEIN MLH, PMS, MUTL"/>
    <property type="match status" value="1"/>
</dbReference>
<dbReference type="PANTHER" id="PTHR10073:SF12">
    <property type="entry name" value="DNA MISMATCH REPAIR PROTEIN MLH1"/>
    <property type="match status" value="1"/>
</dbReference>
<dbReference type="Pfam" id="PF01119">
    <property type="entry name" value="DNA_mis_repair"/>
    <property type="match status" value="1"/>
</dbReference>
<dbReference type="Pfam" id="PF13589">
    <property type="entry name" value="HATPase_c_3"/>
    <property type="match status" value="1"/>
</dbReference>
<dbReference type="Pfam" id="PF08676">
    <property type="entry name" value="MutL_C"/>
    <property type="match status" value="1"/>
</dbReference>
<dbReference type="SMART" id="SM01340">
    <property type="entry name" value="DNA_mis_repair"/>
    <property type="match status" value="1"/>
</dbReference>
<dbReference type="SMART" id="SM00853">
    <property type="entry name" value="MutL_C"/>
    <property type="match status" value="1"/>
</dbReference>
<dbReference type="SUPFAM" id="SSF55874">
    <property type="entry name" value="ATPase domain of HSP90 chaperone/DNA topoisomerase II/histidine kinase"/>
    <property type="match status" value="1"/>
</dbReference>
<dbReference type="SUPFAM" id="SSF118116">
    <property type="entry name" value="DNA mismatch repair protein MutL"/>
    <property type="match status" value="1"/>
</dbReference>
<dbReference type="SUPFAM" id="SSF54211">
    <property type="entry name" value="Ribosomal protein S5 domain 2-like"/>
    <property type="match status" value="1"/>
</dbReference>
<dbReference type="PROSITE" id="PS00058">
    <property type="entry name" value="DNA_MISMATCH_REPAIR_1"/>
    <property type="match status" value="1"/>
</dbReference>